<gene>
    <name type="primary">fba</name>
    <name type="ordered locus">PF1956</name>
</gene>
<proteinExistence type="evidence at protein level"/>
<sequence length="281" mass="31135">MEAPQNVGIKRRLKRFFRRDGRALIFAMDHGFEHGPTDFEPVWEHVNPRVIIRKVVRAGIDGVMMLPGLARIAGDEVKPEVGLMIKLTSKTNLRPKPEQLLQSQLGFVDDAIKLGADAIAATVYWGSPQEDVMMRQFAEIVSYAHDLGYPVVQFAYPRGPYIDEKYGKKEDYRVVMYGARAAAESGADMIKTYWTGSKETFAKVVEAAAGVPVLLSGGAKTENPVDFLKVVWEVIEAGGAGAVVGRNIFQRENPEPMIKALIRVIHRNEDPEEAAKAEGLI</sequence>
<feature type="chain" id="PRO_0000138949" description="Fructose-bisphosphate aldolase class 1">
    <location>
        <begin position="1"/>
        <end position="281"/>
    </location>
</feature>
<feature type="active site" description="Schiff-base intermediate with dihydroxyacetone-P">
    <location>
        <position position="191"/>
    </location>
</feature>
<feature type="mutagenesis site" description="Loss of activity." evidence="1">
    <original>K</original>
    <variation>A</variation>
    <location>
        <position position="191"/>
    </location>
</feature>
<comment type="catalytic activity">
    <reaction>
        <text>beta-D-fructose 1,6-bisphosphate = D-glyceraldehyde 3-phosphate + dihydroxyacetone phosphate</text>
        <dbReference type="Rhea" id="RHEA:14729"/>
        <dbReference type="ChEBI" id="CHEBI:32966"/>
        <dbReference type="ChEBI" id="CHEBI:57642"/>
        <dbReference type="ChEBI" id="CHEBI:59776"/>
        <dbReference type="EC" id="4.1.2.13"/>
    </reaction>
</comment>
<comment type="activity regulation">
    <text>Activated by citrate.</text>
</comment>
<comment type="subunit">
    <text>Homooctamer.</text>
</comment>
<comment type="subcellular location">
    <subcellularLocation>
        <location evidence="2">Cytoplasm</location>
    </subcellularLocation>
</comment>
<comment type="similarity">
    <text evidence="2">Belongs to the DeoC/FbaB aldolase family.</text>
</comment>
<dbReference type="EC" id="4.1.2.13"/>
<dbReference type="EMBL" id="AF368256">
    <property type="protein sequence ID" value="AAK83936.1"/>
    <property type="molecule type" value="Genomic_DNA"/>
</dbReference>
<dbReference type="EMBL" id="AE009950">
    <property type="protein sequence ID" value="AAL82080.1"/>
    <property type="molecule type" value="Genomic_DNA"/>
</dbReference>
<dbReference type="RefSeq" id="WP_011013098.1">
    <property type="nucleotide sequence ID" value="NZ_CP023154.1"/>
</dbReference>
<dbReference type="SMR" id="P58314"/>
<dbReference type="STRING" id="186497.PF1956"/>
<dbReference type="PaxDb" id="186497-PF1956"/>
<dbReference type="GeneID" id="41713778"/>
<dbReference type="KEGG" id="pfu:PF1956"/>
<dbReference type="PATRIC" id="fig|186497.12.peg.2029"/>
<dbReference type="eggNOG" id="arCOG04044">
    <property type="taxonomic scope" value="Archaea"/>
</dbReference>
<dbReference type="HOGENOM" id="CLU_057069_2_2_2"/>
<dbReference type="OrthoDB" id="6329at2157"/>
<dbReference type="PhylomeDB" id="P58314"/>
<dbReference type="BioCyc" id="MetaCyc:MONOMER-11810"/>
<dbReference type="BRENDA" id="4.1.2.13">
    <property type="organism ID" value="5243"/>
</dbReference>
<dbReference type="SABIO-RK" id="P58314"/>
<dbReference type="Proteomes" id="UP000001013">
    <property type="component" value="Chromosome"/>
</dbReference>
<dbReference type="GO" id="GO:0005737">
    <property type="term" value="C:cytoplasm"/>
    <property type="evidence" value="ECO:0007669"/>
    <property type="project" value="UniProtKB-SubCell"/>
</dbReference>
<dbReference type="GO" id="GO:0004332">
    <property type="term" value="F:fructose-bisphosphate aldolase activity"/>
    <property type="evidence" value="ECO:0007669"/>
    <property type="project" value="UniProtKB-EC"/>
</dbReference>
<dbReference type="GO" id="GO:0006096">
    <property type="term" value="P:glycolytic process"/>
    <property type="evidence" value="ECO:0007669"/>
    <property type="project" value="UniProtKB-KW"/>
</dbReference>
<dbReference type="CDD" id="cd00958">
    <property type="entry name" value="DhnA"/>
    <property type="match status" value="1"/>
</dbReference>
<dbReference type="Gene3D" id="3.20.20.70">
    <property type="entry name" value="Aldolase class I"/>
    <property type="match status" value="1"/>
</dbReference>
<dbReference type="InterPro" id="IPR013785">
    <property type="entry name" value="Aldolase_TIM"/>
</dbReference>
<dbReference type="InterPro" id="IPR002915">
    <property type="entry name" value="DeoC/FbaB/LacD_aldolase"/>
</dbReference>
<dbReference type="InterPro" id="IPR050456">
    <property type="entry name" value="DeoC/FbaB_aldolase"/>
</dbReference>
<dbReference type="InterPro" id="IPR053414">
    <property type="entry name" value="FBA_class_1"/>
</dbReference>
<dbReference type="InterPro" id="IPR041720">
    <property type="entry name" value="FbaB-like"/>
</dbReference>
<dbReference type="NCBIfam" id="NF040816">
    <property type="entry name" value="Fbpase1_Arch"/>
    <property type="match status" value="1"/>
</dbReference>
<dbReference type="NCBIfam" id="NF005556">
    <property type="entry name" value="PRK07226.1"/>
    <property type="match status" value="1"/>
</dbReference>
<dbReference type="PANTHER" id="PTHR47916:SF1">
    <property type="entry name" value="3-HYDROXY-5-PHOSPHONOOXYPENTANE-2,4-DIONE THIOLASE"/>
    <property type="match status" value="1"/>
</dbReference>
<dbReference type="PANTHER" id="PTHR47916">
    <property type="entry name" value="FRUCTOSE-BISPHOSPHATE ALDOLASE CLASS 1"/>
    <property type="match status" value="1"/>
</dbReference>
<dbReference type="Pfam" id="PF01791">
    <property type="entry name" value="DeoC"/>
    <property type="match status" value="1"/>
</dbReference>
<dbReference type="PIRSF" id="PIRSF038992">
    <property type="entry name" value="Aldolase_Ia"/>
    <property type="match status" value="1"/>
</dbReference>
<dbReference type="SMART" id="SM01133">
    <property type="entry name" value="DeoC"/>
    <property type="match status" value="1"/>
</dbReference>
<dbReference type="SUPFAM" id="SSF51569">
    <property type="entry name" value="Aldolase"/>
    <property type="match status" value="1"/>
</dbReference>
<evidence type="ECO:0000269" key="1">
    <source>
    </source>
</evidence>
<evidence type="ECO:0000305" key="2"/>
<reference key="1">
    <citation type="journal article" date="2001" name="J. Biol. Chem.">
        <title>Archaeal fructose-1,6-bisphosphate aldolases constitute a new family of archaeal type class I aldolases.</title>
        <authorList>
            <person name="Siebers B."/>
            <person name="Brinkmann H."/>
            <person name="Doerr C."/>
            <person name="Tjaden B."/>
            <person name="Lilie H."/>
            <person name="van der Oost J."/>
            <person name="Verhees C.H."/>
        </authorList>
    </citation>
    <scope>NUCLEOTIDE SEQUENCE [GENOMIC DNA]</scope>
    <scope>CHARACTERIZATION</scope>
    <scope>MUTAGENESIS OF LYS-191</scope>
    <source>
        <strain>ATCC 43587 / DSM 3638 / JCM 8422 / Vc1</strain>
    </source>
</reference>
<reference key="2">
    <citation type="journal article" date="1999" name="Genetics">
        <title>Divergence of the hyperthermophilic archaea Pyrococcus furiosus and P. horikoshii inferred from complete genomic sequences.</title>
        <authorList>
            <person name="Maeder D.L."/>
            <person name="Weiss R.B."/>
            <person name="Dunn D.M."/>
            <person name="Cherry J.L."/>
            <person name="Gonzalez J.M."/>
            <person name="DiRuggiero J."/>
            <person name="Robb F.T."/>
        </authorList>
    </citation>
    <scope>NUCLEOTIDE SEQUENCE [LARGE SCALE GENOMIC DNA]</scope>
    <source>
        <strain>ATCC 43587 / DSM 3638 / JCM 8422 / Vc1</strain>
    </source>
</reference>
<keyword id="KW-0963">Cytoplasm</keyword>
<keyword id="KW-0324">Glycolysis</keyword>
<keyword id="KW-0456">Lyase</keyword>
<keyword id="KW-1185">Reference proteome</keyword>
<keyword id="KW-0704">Schiff base</keyword>
<organism>
    <name type="scientific">Pyrococcus furiosus (strain ATCC 43587 / DSM 3638 / JCM 8422 / Vc1)</name>
    <dbReference type="NCBI Taxonomy" id="186497"/>
    <lineage>
        <taxon>Archaea</taxon>
        <taxon>Methanobacteriati</taxon>
        <taxon>Methanobacteriota</taxon>
        <taxon>Thermococci</taxon>
        <taxon>Thermococcales</taxon>
        <taxon>Thermococcaceae</taxon>
        <taxon>Pyrococcus</taxon>
    </lineage>
</organism>
<protein>
    <recommendedName>
        <fullName>Fructose-bisphosphate aldolase class 1</fullName>
        <ecNumber>4.1.2.13</ecNumber>
    </recommendedName>
    <alternativeName>
        <fullName>Fructose-bisphosphate aldolase class I</fullName>
        <shortName>FBP aldolase</shortName>
    </alternativeName>
</protein>
<name>ALF1_PYRFU</name>
<accession>P58314</accession>